<keyword id="KW-0378">Hydrolase</keyword>
<evidence type="ECO:0000255" key="1">
    <source>
        <dbReference type="HAMAP-Rule" id="MF_00298"/>
    </source>
</evidence>
<feature type="chain" id="PRO_0000057026" description="RNA pyrophosphohydrolase">
    <location>
        <begin position="1"/>
        <end position="176"/>
    </location>
</feature>
<feature type="domain" description="Nudix hydrolase" evidence="1">
    <location>
        <begin position="6"/>
        <end position="149"/>
    </location>
</feature>
<feature type="short sequence motif" description="Nudix box">
    <location>
        <begin position="38"/>
        <end position="59"/>
    </location>
</feature>
<name>RPPH_SALTI</name>
<proteinExistence type="inferred from homology"/>
<dbReference type="EC" id="3.6.1.-" evidence="1"/>
<dbReference type="EMBL" id="AL513382">
    <property type="protein sequence ID" value="CAD02829.1"/>
    <property type="molecule type" value="Genomic_DNA"/>
</dbReference>
<dbReference type="EMBL" id="AE014613">
    <property type="protein sequence ID" value="AAO70467.1"/>
    <property type="molecule type" value="Genomic_DNA"/>
</dbReference>
<dbReference type="RefSeq" id="NP_457398.1">
    <property type="nucleotide sequence ID" value="NC_003198.1"/>
</dbReference>
<dbReference type="RefSeq" id="WP_000564481.1">
    <property type="nucleotide sequence ID" value="NZ_WSUR01000055.1"/>
</dbReference>
<dbReference type="SMR" id="P65555"/>
<dbReference type="STRING" id="220341.gene:17587029"/>
<dbReference type="KEGG" id="stt:t2913"/>
<dbReference type="KEGG" id="sty:STY3145"/>
<dbReference type="PATRIC" id="fig|220341.7.peg.3200"/>
<dbReference type="eggNOG" id="COG0494">
    <property type="taxonomic scope" value="Bacteria"/>
</dbReference>
<dbReference type="HOGENOM" id="CLU_087195_3_2_6"/>
<dbReference type="OMA" id="PCVGIML"/>
<dbReference type="OrthoDB" id="9816040at2"/>
<dbReference type="Proteomes" id="UP000000541">
    <property type="component" value="Chromosome"/>
</dbReference>
<dbReference type="Proteomes" id="UP000002670">
    <property type="component" value="Chromosome"/>
</dbReference>
<dbReference type="GO" id="GO:0005737">
    <property type="term" value="C:cytoplasm"/>
    <property type="evidence" value="ECO:0007669"/>
    <property type="project" value="TreeGrafter"/>
</dbReference>
<dbReference type="GO" id="GO:0034353">
    <property type="term" value="F:mRNA 5'-diphosphatase activity"/>
    <property type="evidence" value="ECO:0007669"/>
    <property type="project" value="TreeGrafter"/>
</dbReference>
<dbReference type="GO" id="GO:0006402">
    <property type="term" value="P:mRNA catabolic process"/>
    <property type="evidence" value="ECO:0007669"/>
    <property type="project" value="TreeGrafter"/>
</dbReference>
<dbReference type="CDD" id="cd03671">
    <property type="entry name" value="NUDIX_Ap4A_hydrolase_plant_like"/>
    <property type="match status" value="1"/>
</dbReference>
<dbReference type="FunFam" id="3.90.79.10:FF:000001">
    <property type="entry name" value="RNA pyrophosphohydrolase"/>
    <property type="match status" value="1"/>
</dbReference>
<dbReference type="Gene3D" id="3.90.79.10">
    <property type="entry name" value="Nucleoside Triphosphate Pyrophosphohydrolase"/>
    <property type="match status" value="1"/>
</dbReference>
<dbReference type="HAMAP" id="MF_00298">
    <property type="entry name" value="Nudix_RppH"/>
    <property type="match status" value="1"/>
</dbReference>
<dbReference type="InterPro" id="IPR020476">
    <property type="entry name" value="Nudix_hydrolase"/>
</dbReference>
<dbReference type="InterPro" id="IPR015797">
    <property type="entry name" value="NUDIX_hydrolase-like_dom_sf"/>
</dbReference>
<dbReference type="InterPro" id="IPR020084">
    <property type="entry name" value="NUDIX_hydrolase_CS"/>
</dbReference>
<dbReference type="InterPro" id="IPR000086">
    <property type="entry name" value="NUDIX_hydrolase_dom"/>
</dbReference>
<dbReference type="InterPro" id="IPR022927">
    <property type="entry name" value="RppH"/>
</dbReference>
<dbReference type="NCBIfam" id="NF001934">
    <property type="entry name" value="PRK00714.1-1"/>
    <property type="match status" value="1"/>
</dbReference>
<dbReference type="NCBIfam" id="NF001937">
    <property type="entry name" value="PRK00714.1-4"/>
    <property type="match status" value="1"/>
</dbReference>
<dbReference type="NCBIfam" id="NF001938">
    <property type="entry name" value="PRK00714.1-5"/>
    <property type="match status" value="1"/>
</dbReference>
<dbReference type="PANTHER" id="PTHR23114">
    <property type="entry name" value="M7GPPPN-MRNA HYDROLASE"/>
    <property type="match status" value="1"/>
</dbReference>
<dbReference type="PANTHER" id="PTHR23114:SF17">
    <property type="entry name" value="M7GPPPN-MRNA HYDROLASE"/>
    <property type="match status" value="1"/>
</dbReference>
<dbReference type="Pfam" id="PF00293">
    <property type="entry name" value="NUDIX"/>
    <property type="match status" value="1"/>
</dbReference>
<dbReference type="PRINTS" id="PR00502">
    <property type="entry name" value="NUDIXFAMILY"/>
</dbReference>
<dbReference type="SUPFAM" id="SSF55811">
    <property type="entry name" value="Nudix"/>
    <property type="match status" value="1"/>
</dbReference>
<dbReference type="PROSITE" id="PS51462">
    <property type="entry name" value="NUDIX"/>
    <property type="match status" value="1"/>
</dbReference>
<dbReference type="PROSITE" id="PS00893">
    <property type="entry name" value="NUDIX_BOX"/>
    <property type="match status" value="1"/>
</dbReference>
<reference key="1">
    <citation type="journal article" date="2001" name="Nature">
        <title>Complete genome sequence of a multiple drug resistant Salmonella enterica serovar Typhi CT18.</title>
        <authorList>
            <person name="Parkhill J."/>
            <person name="Dougan G."/>
            <person name="James K.D."/>
            <person name="Thomson N.R."/>
            <person name="Pickard D."/>
            <person name="Wain J."/>
            <person name="Churcher C.M."/>
            <person name="Mungall K.L."/>
            <person name="Bentley S.D."/>
            <person name="Holden M.T.G."/>
            <person name="Sebaihia M."/>
            <person name="Baker S."/>
            <person name="Basham D."/>
            <person name="Brooks K."/>
            <person name="Chillingworth T."/>
            <person name="Connerton P."/>
            <person name="Cronin A."/>
            <person name="Davis P."/>
            <person name="Davies R.M."/>
            <person name="Dowd L."/>
            <person name="White N."/>
            <person name="Farrar J."/>
            <person name="Feltwell T."/>
            <person name="Hamlin N."/>
            <person name="Haque A."/>
            <person name="Hien T.T."/>
            <person name="Holroyd S."/>
            <person name="Jagels K."/>
            <person name="Krogh A."/>
            <person name="Larsen T.S."/>
            <person name="Leather S."/>
            <person name="Moule S."/>
            <person name="O'Gaora P."/>
            <person name="Parry C."/>
            <person name="Quail M.A."/>
            <person name="Rutherford K.M."/>
            <person name="Simmonds M."/>
            <person name="Skelton J."/>
            <person name="Stevens K."/>
            <person name="Whitehead S."/>
            <person name="Barrell B.G."/>
        </authorList>
    </citation>
    <scope>NUCLEOTIDE SEQUENCE [LARGE SCALE GENOMIC DNA]</scope>
    <source>
        <strain>CT18</strain>
    </source>
</reference>
<reference key="2">
    <citation type="journal article" date="2003" name="J. Bacteriol.">
        <title>Comparative genomics of Salmonella enterica serovar Typhi strains Ty2 and CT18.</title>
        <authorList>
            <person name="Deng W."/>
            <person name="Liou S.-R."/>
            <person name="Plunkett G. III"/>
            <person name="Mayhew G.F."/>
            <person name="Rose D.J."/>
            <person name="Burland V."/>
            <person name="Kodoyianni V."/>
            <person name="Schwartz D.C."/>
            <person name="Blattner F.R."/>
        </authorList>
    </citation>
    <scope>NUCLEOTIDE SEQUENCE [LARGE SCALE GENOMIC DNA]</scope>
    <source>
        <strain>ATCC 700931 / Ty2</strain>
    </source>
</reference>
<protein>
    <recommendedName>
        <fullName evidence="1">RNA pyrophosphohydrolase</fullName>
        <ecNumber evidence="1">3.6.1.-</ecNumber>
    </recommendedName>
    <alternativeName>
        <fullName evidence="1">(Di)nucleoside polyphosphate hydrolase</fullName>
    </alternativeName>
</protein>
<comment type="function">
    <text evidence="1">Accelerates the degradation of transcripts by removing pyrophosphate from the 5'-end of triphosphorylated RNA, leading to a more labile monophosphorylated state that can stimulate subsequent ribonuclease cleavage.</text>
</comment>
<comment type="cofactor">
    <cofactor evidence="1">
        <name>a divalent metal cation</name>
        <dbReference type="ChEBI" id="CHEBI:60240"/>
    </cofactor>
</comment>
<comment type="similarity">
    <text evidence="1">Belongs to the Nudix hydrolase family. RppH subfamily.</text>
</comment>
<accession>P65555</accession>
<accession>Q8XG03</accession>
<sequence>MIDDDGYRPNVGIVICNRQGQVMWARRFGQHSWQFPQGGINPGESAEQAMYRELFEEVGLSRKDVRILASTRNWLRYKLPKRLVRWDTKPVCIGQKQKWFLLQLMSADAEINMQTSSTPEFDGWRWVSYWYPVRQVVSFKRDVYRRVMKEFASVVMALQDNPPKLQSAPAYRRKRG</sequence>
<organism>
    <name type="scientific">Salmonella typhi</name>
    <dbReference type="NCBI Taxonomy" id="90370"/>
    <lineage>
        <taxon>Bacteria</taxon>
        <taxon>Pseudomonadati</taxon>
        <taxon>Pseudomonadota</taxon>
        <taxon>Gammaproteobacteria</taxon>
        <taxon>Enterobacterales</taxon>
        <taxon>Enterobacteriaceae</taxon>
        <taxon>Salmonella</taxon>
    </lineage>
</organism>
<gene>
    <name evidence="1" type="primary">rppH</name>
    <name evidence="1" type="synonym">nudH</name>
    <name type="ordered locus">STY3145</name>
    <name type="ordered locus">t2913</name>
</gene>